<protein>
    <recommendedName>
        <fullName evidence="8">Ophiobolin F synthase</fullName>
        <shortName evidence="8">OS</shortName>
    </recommendedName>
    <alternativeName>
        <fullName evidence="8">Aspergilol biosynthesis cluster protein AuAS</fullName>
    </alternativeName>
    <domain>
        <recommendedName>
            <fullName evidence="8">Ophiobolin F cyclase</fullName>
            <ecNumber evidence="7">4.2.3.145</ecNumber>
        </recommendedName>
    </domain>
    <domain>
        <recommendedName>
            <fullName evidence="8">Geranylgeranyl diphosphate synthase</fullName>
            <shortName evidence="8">GGDP synthase</shortName>
            <shortName evidence="8">GGS</shortName>
            <ecNumber evidence="7">2.5.1.29</ecNumber>
        </recommendedName>
    </domain>
    <domain>
        <recommendedName>
            <fullName>Geranylfarnesyl diphosphate synthase</fullName>
            <shortName evidence="8">GFDP synthase</shortName>
            <ecNumber evidence="7">2.5.1.81</ecNumber>
        </recommendedName>
    </domain>
</protein>
<keyword id="KW-0414">Isoprene biosynthesis</keyword>
<keyword id="KW-0456">Lyase</keyword>
<keyword id="KW-0460">Magnesium</keyword>
<keyword id="KW-0479">Metal-binding</keyword>
<keyword id="KW-0511">Multifunctional enzyme</keyword>
<keyword id="KW-1185">Reference proteome</keyword>
<keyword id="KW-0677">Repeat</keyword>
<keyword id="KW-0808">Transferase</keyword>
<evidence type="ECO:0000250" key="1">
    <source>
        <dbReference type="UniProtKB" id="A1C8C3"/>
    </source>
</evidence>
<evidence type="ECO:0000250" key="2">
    <source>
        <dbReference type="UniProtKB" id="A1DN30"/>
    </source>
</evidence>
<evidence type="ECO:0000250" key="3">
    <source>
        <dbReference type="UniProtKB" id="A2PZA5"/>
    </source>
</evidence>
<evidence type="ECO:0000250" key="4">
    <source>
        <dbReference type="UniProtKB" id="Q12051"/>
    </source>
</evidence>
<evidence type="ECO:0000250" key="5">
    <source>
        <dbReference type="UniProtKB" id="Q40577"/>
    </source>
</evidence>
<evidence type="ECO:0000256" key="6">
    <source>
        <dbReference type="SAM" id="MobiDB-lite"/>
    </source>
</evidence>
<evidence type="ECO:0000269" key="7">
    <source>
    </source>
</evidence>
<evidence type="ECO:0000303" key="8">
    <source>
    </source>
</evidence>
<evidence type="ECO:0000305" key="9"/>
<evidence type="ECO:0000305" key="10">
    <source>
    </source>
</evidence>
<proteinExistence type="evidence at protein level"/>
<dbReference type="EC" id="4.2.3.145" evidence="7"/>
<dbReference type="EC" id="2.5.1.29" evidence="7"/>
<dbReference type="EC" id="2.5.1.81" evidence="7"/>
<dbReference type="EMBL" id="CDMC01000004">
    <property type="protein sequence ID" value="CEL04094.1"/>
    <property type="molecule type" value="Genomic_DNA"/>
</dbReference>
<dbReference type="SMR" id="A0A0U5G0B1"/>
<dbReference type="STRING" id="454130.A0A0U5G0B1"/>
<dbReference type="OMA" id="DLYWTHN"/>
<dbReference type="OrthoDB" id="6921389at2759"/>
<dbReference type="UniPathway" id="UPA00213"/>
<dbReference type="Proteomes" id="UP000054771">
    <property type="component" value="Unassembled WGS sequence"/>
</dbReference>
<dbReference type="GO" id="GO:0016829">
    <property type="term" value="F:lyase activity"/>
    <property type="evidence" value="ECO:0007669"/>
    <property type="project" value="UniProtKB-KW"/>
</dbReference>
<dbReference type="GO" id="GO:0046872">
    <property type="term" value="F:metal ion binding"/>
    <property type="evidence" value="ECO:0007669"/>
    <property type="project" value="UniProtKB-KW"/>
</dbReference>
<dbReference type="GO" id="GO:0004659">
    <property type="term" value="F:prenyltransferase activity"/>
    <property type="evidence" value="ECO:0007669"/>
    <property type="project" value="InterPro"/>
</dbReference>
<dbReference type="GO" id="GO:0046165">
    <property type="term" value="P:alcohol biosynthetic process"/>
    <property type="evidence" value="ECO:0007669"/>
    <property type="project" value="UniProtKB-ARBA"/>
</dbReference>
<dbReference type="GO" id="GO:0043386">
    <property type="term" value="P:mycotoxin biosynthetic process"/>
    <property type="evidence" value="ECO:0007669"/>
    <property type="project" value="UniProtKB-ARBA"/>
</dbReference>
<dbReference type="GO" id="GO:0016114">
    <property type="term" value="P:terpenoid biosynthetic process"/>
    <property type="evidence" value="ECO:0007669"/>
    <property type="project" value="UniProtKB-UniPathway"/>
</dbReference>
<dbReference type="Gene3D" id="1.10.600.10">
    <property type="entry name" value="Farnesyl Diphosphate Synthase"/>
    <property type="match status" value="2"/>
</dbReference>
<dbReference type="InterPro" id="IPR008949">
    <property type="entry name" value="Isoprenoid_synthase_dom_sf"/>
</dbReference>
<dbReference type="InterPro" id="IPR000092">
    <property type="entry name" value="Polyprenyl_synt"/>
</dbReference>
<dbReference type="InterPro" id="IPR033749">
    <property type="entry name" value="Polyprenyl_synt_CS"/>
</dbReference>
<dbReference type="PANTHER" id="PTHR12001">
    <property type="entry name" value="GERANYLGERANYL PYROPHOSPHATE SYNTHASE"/>
    <property type="match status" value="1"/>
</dbReference>
<dbReference type="PANTHER" id="PTHR12001:SF72">
    <property type="entry name" value="THIJ_PFPI FAMILY PROTEIN (AFU_ORTHOLOGUE AFUA_3G01210)-RELATED"/>
    <property type="match status" value="1"/>
</dbReference>
<dbReference type="Pfam" id="PF00348">
    <property type="entry name" value="polyprenyl_synt"/>
    <property type="match status" value="1"/>
</dbReference>
<dbReference type="Pfam" id="PF19086">
    <property type="entry name" value="Terpene_syn_C_2"/>
    <property type="match status" value="1"/>
</dbReference>
<dbReference type="SFLD" id="SFLDS00005">
    <property type="entry name" value="Isoprenoid_Synthase_Type_I"/>
    <property type="match status" value="1"/>
</dbReference>
<dbReference type="SUPFAM" id="SSF48576">
    <property type="entry name" value="Terpenoid synthases"/>
    <property type="match status" value="2"/>
</dbReference>
<dbReference type="PROSITE" id="PS00723">
    <property type="entry name" value="POLYPRENYL_SYNTHASE_1"/>
    <property type="match status" value="1"/>
</dbReference>
<dbReference type="PROSITE" id="PS00444">
    <property type="entry name" value="POLYPRENYL_SYNTHASE_2"/>
    <property type="match status" value="1"/>
</dbReference>
<name>OBLA_ASPCI</name>
<gene>
    <name evidence="8" type="primary">AcldOS</name>
    <name type="ORF">ASPCAL05226</name>
</gene>
<organism>
    <name type="scientific">Aspergillus calidoustus</name>
    <dbReference type="NCBI Taxonomy" id="454130"/>
    <lineage>
        <taxon>Eukaryota</taxon>
        <taxon>Fungi</taxon>
        <taxon>Dikarya</taxon>
        <taxon>Ascomycota</taxon>
        <taxon>Pezizomycotina</taxon>
        <taxon>Eurotiomycetes</taxon>
        <taxon>Eurotiomycetidae</taxon>
        <taxon>Eurotiales</taxon>
        <taxon>Aspergillaceae</taxon>
        <taxon>Aspergillus</taxon>
        <taxon>Aspergillus subgen. Nidulantes</taxon>
    </lineage>
</organism>
<reference key="1">
    <citation type="journal article" date="2016" name="Genome Announc.">
        <title>Draft genome sequences of fungus Aspergillus calidoustus.</title>
        <authorList>
            <person name="Horn F."/>
            <person name="Linde J."/>
            <person name="Mattern D.J."/>
            <person name="Walther G."/>
            <person name="Guthke R."/>
            <person name="Scherlach K."/>
            <person name="Martin K."/>
            <person name="Brakhage A.A."/>
            <person name="Petzke L."/>
            <person name="Valiante V."/>
        </authorList>
    </citation>
    <scope>NUCLEOTIDE SEQUENCE [LARGE SCALE GENOMIC DNA]</scope>
    <source>
        <strain>SF006504</strain>
    </source>
</reference>
<reference key="2">
    <citation type="journal article" date="2020" name="Org. Biomol. Chem.">
        <title>On the mechanism of ophiobolin F synthase and the absolute configuration of its product by isotopic labelling experiments.</title>
        <authorList>
            <person name="Quan Z."/>
            <person name="Dickschat J.S."/>
        </authorList>
    </citation>
    <scope>FUNCTION</scope>
    <scope>CATALYTIC ACTIVITY</scope>
    <scope>DOMAIN</scope>
</reference>
<accession>A0A0U5G0B1</accession>
<comment type="function">
    <text evidence="7">Bifunctional sesterterpene synthase that converts isopentenyl diphosphate (IPP) and dimethylallyl diphosphate (DMAPP) into ophiobolin F (PubMed:32725018). The C-terminal prenyltransferase (PT) domain of AcldOS converts isopentenyl diphosphate and dimethylallyl diphosphate into geranylfarnesyl diphosphate (GFPP), whereas the N-terminal terpene cyclase (TC) domain catalyzes the cyclization of GFPP to ophiobolin F (PubMed:32725018).</text>
</comment>
<comment type="catalytic activity">
    <reaction evidence="7">
        <text>isopentenyl diphosphate + (2E,6E)-farnesyl diphosphate = (2E,6E,10E)-geranylgeranyl diphosphate + diphosphate</text>
        <dbReference type="Rhea" id="RHEA:17653"/>
        <dbReference type="ChEBI" id="CHEBI:33019"/>
        <dbReference type="ChEBI" id="CHEBI:58756"/>
        <dbReference type="ChEBI" id="CHEBI:128769"/>
        <dbReference type="ChEBI" id="CHEBI:175763"/>
        <dbReference type="EC" id="2.5.1.29"/>
    </reaction>
    <physiologicalReaction direction="left-to-right" evidence="7">
        <dbReference type="Rhea" id="RHEA:17654"/>
    </physiologicalReaction>
</comment>
<comment type="catalytic activity">
    <reaction evidence="7">
        <text>isopentenyl diphosphate + (2E,6E,10E)-geranylgeranyl diphosphate = (2E,6E,10E,14E)-geranylfarnesyl diphosphate + diphosphate</text>
        <dbReference type="Rhea" id="RHEA:25694"/>
        <dbReference type="ChEBI" id="CHEBI:33019"/>
        <dbReference type="ChEBI" id="CHEBI:57907"/>
        <dbReference type="ChEBI" id="CHEBI:58756"/>
        <dbReference type="ChEBI" id="CHEBI:128769"/>
        <dbReference type="EC" id="2.5.1.81"/>
    </reaction>
    <physiologicalReaction direction="left-to-right" evidence="7">
        <dbReference type="Rhea" id="RHEA:25695"/>
    </physiologicalReaction>
</comment>
<comment type="catalytic activity">
    <reaction evidence="7">
        <text>(2E,6E,10E,14E)-geranylfarnesyl diphosphate + H2O = ophiobolin F + diphosphate</text>
        <dbReference type="Rhea" id="RHEA:41552"/>
        <dbReference type="ChEBI" id="CHEBI:15377"/>
        <dbReference type="ChEBI" id="CHEBI:33019"/>
        <dbReference type="ChEBI" id="CHEBI:57907"/>
        <dbReference type="ChEBI" id="CHEBI:78293"/>
        <dbReference type="EC" id="4.2.3.145"/>
    </reaction>
    <physiologicalReaction direction="left-to-right" evidence="7">
        <dbReference type="Rhea" id="RHEA:41553"/>
    </physiologicalReaction>
</comment>
<comment type="cofactor">
    <cofactor evidence="4">
        <name>Mg(2+)</name>
        <dbReference type="ChEBI" id="CHEBI:18420"/>
    </cofactor>
    <text evidence="4">Binds 4 Mg(2+) ions per subunit.</text>
</comment>
<comment type="pathway">
    <text evidence="7">Secondary metabolite biosynthesis; terpenoid biosynthesis.</text>
</comment>
<comment type="domain">
    <text evidence="10">The conserved DDXXD motifs as well as the NSE/DTE motif are important for the catalytic activity, presumably through binding to Mg(2+).</text>
</comment>
<comment type="similarity">
    <text evidence="9">In the N-terminal section; belongs to the terpene synthase family.</text>
</comment>
<comment type="similarity">
    <text evidence="9">In the C-terminal section; belongs to the FPP/GGPP synthase family.</text>
</comment>
<feature type="chain" id="PRO_0000453703" description="Ophiobolin F synthase">
    <location>
        <begin position="1"/>
        <end position="725"/>
    </location>
</feature>
<feature type="region of interest" description="(7Z)-ophiobola-7,19-dien-3-ol synthase" evidence="1">
    <location>
        <begin position="1"/>
        <end position="322"/>
    </location>
</feature>
<feature type="region of interest" description="Geranylfarnesyl diphosphate synthase" evidence="1">
    <location>
        <begin position="323"/>
        <end position="725"/>
    </location>
</feature>
<feature type="region of interest" description="Disordered" evidence="6">
    <location>
        <begin position="362"/>
        <end position="388"/>
    </location>
</feature>
<feature type="short sequence motif" description="DDXXD 1" evidence="2">
    <location>
        <begin position="93"/>
        <end position="97"/>
    </location>
</feature>
<feature type="short sequence motif" description="NSE/DTE" evidence="2">
    <location>
        <begin position="226"/>
        <end position="234"/>
    </location>
</feature>
<feature type="short sequence motif" description="DDXXD 2" evidence="2">
    <location>
        <begin position="475"/>
        <end position="479"/>
    </location>
</feature>
<feature type="compositionally biased region" description="Basic and acidic residues" evidence="6">
    <location>
        <begin position="373"/>
        <end position="382"/>
    </location>
</feature>
<feature type="binding site" evidence="5">
    <location>
        <position position="93"/>
    </location>
    <ligand>
        <name>Mg(2+)</name>
        <dbReference type="ChEBI" id="CHEBI:18420"/>
        <label>1</label>
    </ligand>
</feature>
<feature type="binding site" evidence="5">
    <location>
        <position position="93"/>
    </location>
    <ligand>
        <name>Mg(2+)</name>
        <dbReference type="ChEBI" id="CHEBI:18420"/>
        <label>2</label>
    </ligand>
</feature>
<feature type="binding site" evidence="3">
    <location>
        <position position="93"/>
    </location>
    <ligand>
        <name>substrate</name>
    </ligand>
</feature>
<feature type="binding site" evidence="5">
    <location>
        <position position="97"/>
    </location>
    <ligand>
        <name>Mg(2+)</name>
        <dbReference type="ChEBI" id="CHEBI:18420"/>
        <label>1</label>
    </ligand>
</feature>
<feature type="binding site" evidence="5">
    <location>
        <position position="97"/>
    </location>
    <ligand>
        <name>Mg(2+)</name>
        <dbReference type="ChEBI" id="CHEBI:18420"/>
        <label>2</label>
    </ligand>
</feature>
<feature type="binding site" evidence="3">
    <location>
        <begin position="182"/>
        <end position="185"/>
    </location>
    <ligand>
        <name>substrate</name>
    </ligand>
</feature>
<feature type="binding site" evidence="3">
    <location>
        <position position="226"/>
    </location>
    <ligand>
        <name>substrate</name>
    </ligand>
</feature>
<feature type="binding site" evidence="3">
    <location>
        <begin position="230"/>
        <end position="234"/>
    </location>
    <ligand>
        <name>substrate</name>
    </ligand>
</feature>
<feature type="binding site" evidence="3">
    <location>
        <begin position="313"/>
        <end position="314"/>
    </location>
    <ligand>
        <name>substrate</name>
    </ligand>
</feature>
<feature type="binding site" evidence="4">
    <location>
        <position position="436"/>
    </location>
    <ligand>
        <name>isopentenyl diphosphate</name>
        <dbReference type="ChEBI" id="CHEBI:128769"/>
    </ligand>
</feature>
<feature type="binding site" evidence="4">
    <location>
        <position position="439"/>
    </location>
    <ligand>
        <name>isopentenyl diphosphate</name>
        <dbReference type="ChEBI" id="CHEBI:128769"/>
    </ligand>
</feature>
<feature type="binding site" evidence="4">
    <location>
        <position position="468"/>
    </location>
    <ligand>
        <name>isopentenyl diphosphate</name>
        <dbReference type="ChEBI" id="CHEBI:128769"/>
    </ligand>
</feature>
<feature type="binding site" evidence="4">
    <location>
        <position position="475"/>
    </location>
    <ligand>
        <name>Mg(2+)</name>
        <dbReference type="ChEBI" id="CHEBI:18420"/>
        <label>3</label>
    </ligand>
</feature>
<feature type="binding site" evidence="4">
    <location>
        <position position="475"/>
    </location>
    <ligand>
        <name>Mg(2+)</name>
        <dbReference type="ChEBI" id="CHEBI:18420"/>
        <label>4</label>
    </ligand>
</feature>
<feature type="binding site" evidence="4">
    <location>
        <position position="479"/>
    </location>
    <ligand>
        <name>Mg(2+)</name>
        <dbReference type="ChEBI" id="CHEBI:18420"/>
        <label>3</label>
    </ligand>
</feature>
<feature type="binding site" evidence="4">
    <location>
        <position position="479"/>
    </location>
    <ligand>
        <name>Mg(2+)</name>
        <dbReference type="ChEBI" id="CHEBI:18420"/>
        <label>4</label>
    </ligand>
</feature>
<feature type="binding site" evidence="4">
    <location>
        <position position="484"/>
    </location>
    <ligand>
        <name>dimethylallyl diphosphate</name>
        <dbReference type="ChEBI" id="CHEBI:57623"/>
    </ligand>
</feature>
<feature type="binding site" evidence="4">
    <location>
        <position position="485"/>
    </location>
    <ligand>
        <name>isopentenyl diphosphate</name>
        <dbReference type="ChEBI" id="CHEBI:128769"/>
    </ligand>
</feature>
<feature type="binding site" evidence="4">
    <location>
        <position position="562"/>
    </location>
    <ligand>
        <name>dimethylallyl diphosphate</name>
        <dbReference type="ChEBI" id="CHEBI:57623"/>
    </ligand>
</feature>
<feature type="binding site" evidence="4">
    <location>
        <position position="563"/>
    </location>
    <ligand>
        <name>dimethylallyl diphosphate</name>
        <dbReference type="ChEBI" id="CHEBI:57623"/>
    </ligand>
</feature>
<feature type="binding site" evidence="4">
    <location>
        <position position="601"/>
    </location>
    <ligand>
        <name>dimethylallyl diphosphate</name>
        <dbReference type="ChEBI" id="CHEBI:57623"/>
    </ligand>
</feature>
<feature type="binding site" evidence="4">
    <location>
        <position position="608"/>
    </location>
    <ligand>
        <name>dimethylallyl diphosphate</name>
        <dbReference type="ChEBI" id="CHEBI:57623"/>
    </ligand>
</feature>
<feature type="binding site" evidence="4">
    <location>
        <position position="618"/>
    </location>
    <ligand>
        <name>dimethylallyl diphosphate</name>
        <dbReference type="ChEBI" id="CHEBI:57623"/>
    </ligand>
</feature>
<feature type="binding site" evidence="4">
    <location>
        <position position="628"/>
    </location>
    <ligand>
        <name>dimethylallyl diphosphate</name>
        <dbReference type="ChEBI" id="CHEBI:57623"/>
    </ligand>
</feature>
<sequence length="725" mass="82262">MEYKYSTIVDSSKWDPEGLIEGIPLRKHEAGDLEEVGSFRVQEDWRRLVGPVENPFRGSLGPEISFITYTVPECLPERLEAISYGLDYGFLHDDEIDTKIEEAELDDVGAALAQGGSTGKIQEGTKSSGKRKMAAQLLREMMALDPERAMTLAKSWAQGVQHSARRVEEKDWKSLDEYIPFRCMDLGYMHWHGLVTFGCAITVPEEEEEERRTLLEPAVIACLMTNDLFSYEKEKNDNNPQNAVAVIMKIHKCSEEEARDICKQRIRLECRKYARIVKETLARTDISLDLKRYIEIMQYTVSGNWAWSTQCPRYHADAKFNELQMLRAEHGVAKYPARYSLENRKNGANGVNGVNGINGVNGVNGVNGKRKRSGEETADDARTNGNGIKKPAHVLEYRDSLVLEDIVALSLDWNLPDLSDGVVVQPYKYLTSLPSKGFRDQAIDSLNTWLRVPTKTTKMIKDVIKMLHSASLMLDDIEDNSPLRRGKPSTHVIYGNAQTINSATYQYTEATGLAARLPNPTSLRIYLEEVQQLYIGQSYDLYWTHNALCPSIPEYLKMVDQKTGGLFRMLTRLMVSESPARSSILDQTLYPLSHLIGRFFQIRDDYQNLASAEYARQKGYAEDLDEGKYSFTLIHCINTLEAEASLASEKMALRAFLIKRRVDSSLSNESKREVLDIMKKTKSLEYTLGVLRALQAELEKEVDSLEAKFGEENFSLRMMLELLKV</sequence>